<sequence>MAKDIKFSEEARRSMLRGVDTLANAVKVTLGPKGRNVVLEKKFGSPLITNDGVTIAKEIELEDAFENMGAKLVAEVASKTNDVAGDGTTTATVLAQAMIREGLKNVTAGANPMGLRKGIEKAVVAAVEELKTISKPIEGKSSIAQVAAISAADEEVGQLIAEAMERVGNDGVITLEESKGFTTELDVVEGMQFDRGYASPYMITDSDKMEAVLDNPYILITDKKISNIQEILPVLEQVVQQGKPLLIIAEDVEGEALATLVVNKLRGTFNVVAVKAPGFGDRRKAMLEDIAILTGGEVITEELGRDLKSATVESLGRAGKVVVTKENTTVVEGVGSTEQIEARIGQIRAQLEETTSEFDREKLQERLAKLAGGVAVIKVGAATETELKERKLRIEDALNSTRAAVEEGIVAGGGTSLMNVYTKVASIVAEGDEATGINIVLRALEEPVRQIAINAGLEGSVVVERLKGEKVGVGFNAATGEWVNMLETGIVDPAKVTRSALQNAASVAAMFLTTEAVVADKPEPNAPAMPDMGGMGMGGMGGMM</sequence>
<dbReference type="EC" id="5.6.1.7" evidence="1"/>
<dbReference type="EMBL" id="CP000001">
    <property type="protein sequence ID" value="AAU19996.1"/>
    <property type="molecule type" value="Genomic_DNA"/>
</dbReference>
<dbReference type="RefSeq" id="WP_001029999.1">
    <property type="nucleotide sequence ID" value="NZ_CP009968.1"/>
</dbReference>
<dbReference type="SMR" id="Q63GV7"/>
<dbReference type="GeneID" id="69534143"/>
<dbReference type="KEGG" id="bcz:BCE33L0240"/>
<dbReference type="PATRIC" id="fig|288681.22.peg.5370"/>
<dbReference type="Proteomes" id="UP000002612">
    <property type="component" value="Chromosome"/>
</dbReference>
<dbReference type="GO" id="GO:0005737">
    <property type="term" value="C:cytoplasm"/>
    <property type="evidence" value="ECO:0007669"/>
    <property type="project" value="UniProtKB-SubCell"/>
</dbReference>
<dbReference type="GO" id="GO:0005524">
    <property type="term" value="F:ATP binding"/>
    <property type="evidence" value="ECO:0007669"/>
    <property type="project" value="UniProtKB-UniRule"/>
</dbReference>
<dbReference type="GO" id="GO:0140662">
    <property type="term" value="F:ATP-dependent protein folding chaperone"/>
    <property type="evidence" value="ECO:0007669"/>
    <property type="project" value="InterPro"/>
</dbReference>
<dbReference type="GO" id="GO:0016853">
    <property type="term" value="F:isomerase activity"/>
    <property type="evidence" value="ECO:0007669"/>
    <property type="project" value="UniProtKB-KW"/>
</dbReference>
<dbReference type="GO" id="GO:0051082">
    <property type="term" value="F:unfolded protein binding"/>
    <property type="evidence" value="ECO:0007669"/>
    <property type="project" value="UniProtKB-UniRule"/>
</dbReference>
<dbReference type="GO" id="GO:0042026">
    <property type="term" value="P:protein refolding"/>
    <property type="evidence" value="ECO:0007669"/>
    <property type="project" value="UniProtKB-UniRule"/>
</dbReference>
<dbReference type="CDD" id="cd03344">
    <property type="entry name" value="GroEL"/>
    <property type="match status" value="1"/>
</dbReference>
<dbReference type="FunFam" id="1.10.560.10:FF:000001">
    <property type="entry name" value="60 kDa chaperonin"/>
    <property type="match status" value="1"/>
</dbReference>
<dbReference type="FunFam" id="3.50.7.10:FF:000001">
    <property type="entry name" value="60 kDa chaperonin"/>
    <property type="match status" value="1"/>
</dbReference>
<dbReference type="Gene3D" id="3.50.7.10">
    <property type="entry name" value="GroEL"/>
    <property type="match status" value="1"/>
</dbReference>
<dbReference type="Gene3D" id="1.10.560.10">
    <property type="entry name" value="GroEL-like equatorial domain"/>
    <property type="match status" value="1"/>
</dbReference>
<dbReference type="Gene3D" id="3.30.260.10">
    <property type="entry name" value="TCP-1-like chaperonin intermediate domain"/>
    <property type="match status" value="1"/>
</dbReference>
<dbReference type="HAMAP" id="MF_00600">
    <property type="entry name" value="CH60"/>
    <property type="match status" value="1"/>
</dbReference>
<dbReference type="InterPro" id="IPR018370">
    <property type="entry name" value="Chaperonin_Cpn60_CS"/>
</dbReference>
<dbReference type="InterPro" id="IPR001844">
    <property type="entry name" value="Cpn60/GroEL"/>
</dbReference>
<dbReference type="InterPro" id="IPR002423">
    <property type="entry name" value="Cpn60/GroEL/TCP-1"/>
</dbReference>
<dbReference type="InterPro" id="IPR027409">
    <property type="entry name" value="GroEL-like_apical_dom_sf"/>
</dbReference>
<dbReference type="InterPro" id="IPR027413">
    <property type="entry name" value="GROEL-like_equatorial_sf"/>
</dbReference>
<dbReference type="InterPro" id="IPR027410">
    <property type="entry name" value="TCP-1-like_intermed_sf"/>
</dbReference>
<dbReference type="NCBIfam" id="TIGR02348">
    <property type="entry name" value="GroEL"/>
    <property type="match status" value="1"/>
</dbReference>
<dbReference type="NCBIfam" id="NF000592">
    <property type="entry name" value="PRK00013.1"/>
    <property type="match status" value="1"/>
</dbReference>
<dbReference type="NCBIfam" id="NF009487">
    <property type="entry name" value="PRK12849.1"/>
    <property type="match status" value="1"/>
</dbReference>
<dbReference type="NCBIfam" id="NF009488">
    <property type="entry name" value="PRK12850.1"/>
    <property type="match status" value="1"/>
</dbReference>
<dbReference type="NCBIfam" id="NF009489">
    <property type="entry name" value="PRK12851.1"/>
    <property type="match status" value="1"/>
</dbReference>
<dbReference type="PANTHER" id="PTHR45633">
    <property type="entry name" value="60 KDA HEAT SHOCK PROTEIN, MITOCHONDRIAL"/>
    <property type="match status" value="1"/>
</dbReference>
<dbReference type="Pfam" id="PF00118">
    <property type="entry name" value="Cpn60_TCP1"/>
    <property type="match status" value="1"/>
</dbReference>
<dbReference type="PRINTS" id="PR00298">
    <property type="entry name" value="CHAPERONIN60"/>
</dbReference>
<dbReference type="SUPFAM" id="SSF52029">
    <property type="entry name" value="GroEL apical domain-like"/>
    <property type="match status" value="1"/>
</dbReference>
<dbReference type="SUPFAM" id="SSF48592">
    <property type="entry name" value="GroEL equatorial domain-like"/>
    <property type="match status" value="1"/>
</dbReference>
<dbReference type="SUPFAM" id="SSF54849">
    <property type="entry name" value="GroEL-intermediate domain like"/>
    <property type="match status" value="1"/>
</dbReference>
<dbReference type="PROSITE" id="PS00296">
    <property type="entry name" value="CHAPERONINS_CPN60"/>
    <property type="match status" value="1"/>
</dbReference>
<reference key="1">
    <citation type="journal article" date="2006" name="J. Bacteriol.">
        <title>Pathogenomic sequence analysis of Bacillus cereus and Bacillus thuringiensis isolates closely related to Bacillus anthracis.</title>
        <authorList>
            <person name="Han C.S."/>
            <person name="Xie G."/>
            <person name="Challacombe J.F."/>
            <person name="Altherr M.R."/>
            <person name="Bhotika S.S."/>
            <person name="Bruce D."/>
            <person name="Campbell C.S."/>
            <person name="Campbell M.L."/>
            <person name="Chen J."/>
            <person name="Chertkov O."/>
            <person name="Cleland C."/>
            <person name="Dimitrijevic M."/>
            <person name="Doggett N.A."/>
            <person name="Fawcett J.J."/>
            <person name="Glavina T."/>
            <person name="Goodwin L.A."/>
            <person name="Hill K.K."/>
            <person name="Hitchcock P."/>
            <person name="Jackson P.J."/>
            <person name="Keim P."/>
            <person name="Kewalramani A.R."/>
            <person name="Longmire J."/>
            <person name="Lucas S."/>
            <person name="Malfatti S."/>
            <person name="McMurry K."/>
            <person name="Meincke L.J."/>
            <person name="Misra M."/>
            <person name="Moseman B.L."/>
            <person name="Mundt M."/>
            <person name="Munk A.C."/>
            <person name="Okinaka R.T."/>
            <person name="Parson-Quintana B."/>
            <person name="Reilly L.P."/>
            <person name="Richardson P."/>
            <person name="Robinson D.L."/>
            <person name="Rubin E."/>
            <person name="Saunders E."/>
            <person name="Tapia R."/>
            <person name="Tesmer J.G."/>
            <person name="Thayer N."/>
            <person name="Thompson L.S."/>
            <person name="Tice H."/>
            <person name="Ticknor L.O."/>
            <person name="Wills P.L."/>
            <person name="Brettin T.S."/>
            <person name="Gilna P."/>
        </authorList>
    </citation>
    <scope>NUCLEOTIDE SEQUENCE [LARGE SCALE GENOMIC DNA]</scope>
    <source>
        <strain>ZK / E33L</strain>
    </source>
</reference>
<organism>
    <name type="scientific">Bacillus cereus (strain ZK / E33L)</name>
    <dbReference type="NCBI Taxonomy" id="288681"/>
    <lineage>
        <taxon>Bacteria</taxon>
        <taxon>Bacillati</taxon>
        <taxon>Bacillota</taxon>
        <taxon>Bacilli</taxon>
        <taxon>Bacillales</taxon>
        <taxon>Bacillaceae</taxon>
        <taxon>Bacillus</taxon>
        <taxon>Bacillus cereus group</taxon>
    </lineage>
</organism>
<protein>
    <recommendedName>
        <fullName evidence="1">Chaperonin GroEL</fullName>
        <ecNumber evidence="1">5.6.1.7</ecNumber>
    </recommendedName>
    <alternativeName>
        <fullName evidence="1">60 kDa chaperonin</fullName>
    </alternativeName>
    <alternativeName>
        <fullName evidence="1">Chaperonin-60</fullName>
        <shortName evidence="1">Cpn60</shortName>
    </alternativeName>
</protein>
<evidence type="ECO:0000255" key="1">
    <source>
        <dbReference type="HAMAP-Rule" id="MF_00600"/>
    </source>
</evidence>
<keyword id="KW-0067">ATP-binding</keyword>
<keyword id="KW-0143">Chaperone</keyword>
<keyword id="KW-0963">Cytoplasm</keyword>
<keyword id="KW-0413">Isomerase</keyword>
<keyword id="KW-0547">Nucleotide-binding</keyword>
<feature type="chain" id="PRO_0000063270" description="Chaperonin GroEL">
    <location>
        <begin position="1"/>
        <end position="544"/>
    </location>
</feature>
<feature type="binding site" evidence="1">
    <location>
        <begin position="29"/>
        <end position="32"/>
    </location>
    <ligand>
        <name>ATP</name>
        <dbReference type="ChEBI" id="CHEBI:30616"/>
    </ligand>
</feature>
<feature type="binding site" evidence="1">
    <location>
        <begin position="86"/>
        <end position="90"/>
    </location>
    <ligand>
        <name>ATP</name>
        <dbReference type="ChEBI" id="CHEBI:30616"/>
    </ligand>
</feature>
<feature type="binding site" evidence="1">
    <location>
        <position position="413"/>
    </location>
    <ligand>
        <name>ATP</name>
        <dbReference type="ChEBI" id="CHEBI:30616"/>
    </ligand>
</feature>
<feature type="binding site" evidence="1">
    <location>
        <begin position="476"/>
        <end position="478"/>
    </location>
    <ligand>
        <name>ATP</name>
        <dbReference type="ChEBI" id="CHEBI:30616"/>
    </ligand>
</feature>
<feature type="binding site" evidence="1">
    <location>
        <position position="492"/>
    </location>
    <ligand>
        <name>ATP</name>
        <dbReference type="ChEBI" id="CHEBI:30616"/>
    </ligand>
</feature>
<gene>
    <name evidence="1" type="primary">groEL</name>
    <name evidence="1" type="synonym">groL</name>
    <name type="ordered locus">BCE33L0240</name>
</gene>
<accession>Q63GV7</accession>
<proteinExistence type="inferred from homology"/>
<comment type="function">
    <text evidence="1">Together with its co-chaperonin GroES, plays an essential role in assisting protein folding. The GroEL-GroES system forms a nano-cage that allows encapsulation of the non-native substrate proteins and provides a physical environment optimized to promote and accelerate protein folding.</text>
</comment>
<comment type="catalytic activity">
    <reaction evidence="1">
        <text>ATP + H2O + a folded polypeptide = ADP + phosphate + an unfolded polypeptide.</text>
        <dbReference type="EC" id="5.6.1.7"/>
    </reaction>
</comment>
<comment type="subunit">
    <text evidence="1">Forms a cylinder of 14 subunits composed of two heptameric rings stacked back-to-back. Interacts with the co-chaperonin GroES.</text>
</comment>
<comment type="subcellular location">
    <subcellularLocation>
        <location evidence="1">Cytoplasm</location>
    </subcellularLocation>
</comment>
<comment type="similarity">
    <text evidence="1">Belongs to the chaperonin (HSP60) family.</text>
</comment>
<name>CH60_BACCZ</name>